<name>RPOC_BACTN</name>
<reference key="1">
    <citation type="journal article" date="2003" name="Science">
        <title>A genomic view of the human-Bacteroides thetaiotaomicron symbiosis.</title>
        <authorList>
            <person name="Xu J."/>
            <person name="Bjursell M.K."/>
            <person name="Himrod J."/>
            <person name="Deng S."/>
            <person name="Carmichael L.K."/>
            <person name="Chiang H.C."/>
            <person name="Hooper L.V."/>
            <person name="Gordon J.I."/>
        </authorList>
    </citation>
    <scope>NUCLEOTIDE SEQUENCE [LARGE SCALE GENOMIC DNA]</scope>
    <source>
        <strain>ATCC 29148 / DSM 2079 / JCM 5827 / CCUG 10774 / NCTC 10582 / VPI-5482 / E50</strain>
    </source>
</reference>
<proteinExistence type="inferred from homology"/>
<sequence length="1427" mass="158439">MAFRKENKTKSNFSKISIGLASPEEILENSSGEVLKPETINYRTYKPERDGLFCERIFGPIKDYECHCGKYKRIRYKGIVCDRCGVEVTEKKVRRERMGHIQLVVPVAHIWYFRSLPNKIGYLLGLPTKKLDSIIYYERYVVIQPGVKAEDGIAEYDLLSEEEYLDILDTLPKDNQYLEDNDPNKFIAKMGAEAIYDLLARLDLDALSYELRHRAGNDASQQRKNEALKRLQVVESFRASRGRNKPEWMIVRIVPVIPPELRPLVPLDGGRFATSDLNDLYRRVIIRNNRLKRLIEIKAPEVILRNEKRMLQESVDSLFDNSRKSSAVKTDANRPLKSLSDSLKGKQGRFRQNLLGKRVDYSARSVIVVGPELKMGECGIPKLMAAELYKPFIIRKLIERGIVKTVKSAKKIVDRKEAVIWDILEHVMKGHPVLLNRAPTLHRLGIQAFQPKMIEGKAIQLHPLACTAFNADFDGDQMAVHLPLSNEAILEAQMLMLQSHNILNPANGAPITVPAQDMVLGLYYITKLRAGAKGEGLTFYGPEEALIAYNEGKVDIHAPVKVIVKDVDENGNIVDVMRETSVGRVIVNEIVPPEAGYINTIISKKSLRDIISDVIKVCGVAKAADFLDGIKNLGYQMAFKGGLSFNLGDIIIPKEKETLVQKGYDEVEQVVNNYNMGFITNNERYNQVIDIWTHVNSELSNILMKTISSDDQGFNSVYMMLDSGARGSKEQIRQLSGMRGLMAKLQKAGAEGGQIIENPILSNFKEGLSVLEYFISTHGARKGLADTALKTADAGYLTRRLVDVSHDVIITEEDCGTLRGLVCTDLKNNDEVIATLYERILGRVSVHDIIHPTTGELLVAGGEEITEEVAKKIQDSPIESVEIRSVLTCEAKKGVCAKCYGRNLATSRMVQKGEAVGVIAAQSIGEPGTQLTLRTFHAGGTAANIAANASIVAKNSARLEFEELRTVDIVDEMGEAAKVVVGRLAEVRFVDVNTGIVLSTHNVPYGSTLYVSDGDLVEKGKLIAKWDPFNAVIITEATGKIEFEGVIENVTYKVESDEATGLREIIIIESKDKTKVPSAHILTEDGDLIRTYNLPVGGHVIIENGQKVKAGEVIVKIPRAVGKAGDITGGLPRVTELFEARNPSNPAVVSEIDGEVTMGKIKRGNREIIVTSKTGEVKKYLVALSKQILVQENDYVRAGTPLSDGATTPADILAIKGPTAVQEYIVNEVQDVYRLQGVKINDKHFEIIVRQMMRKVQIDEPGDTRFLEQQVVDKLEFMEENDRIWGKKVVVDAGDSQNMQPGQIVTARKLRDENSMLKRRDLKPVEVRDAVAATSTQILQGITRAALQTSSFMSAASFQETTKVLNEAAINGKTDKLEGMKENVICGHLIPAGTGQREFEKIIVGSKEEYDRILANKKTVLDYNEVE</sequence>
<accession>Q8A470</accession>
<feature type="chain" id="PRO_0000067708" description="DNA-directed RNA polymerase subunit beta'">
    <location>
        <begin position="1"/>
        <end position="1427"/>
    </location>
</feature>
<feature type="binding site" evidence="1">
    <location>
        <position position="66"/>
    </location>
    <ligand>
        <name>Zn(2+)</name>
        <dbReference type="ChEBI" id="CHEBI:29105"/>
        <label>1</label>
    </ligand>
</feature>
<feature type="binding site" evidence="1">
    <location>
        <position position="68"/>
    </location>
    <ligand>
        <name>Zn(2+)</name>
        <dbReference type="ChEBI" id="CHEBI:29105"/>
        <label>1</label>
    </ligand>
</feature>
<feature type="binding site" evidence="1">
    <location>
        <position position="81"/>
    </location>
    <ligand>
        <name>Zn(2+)</name>
        <dbReference type="ChEBI" id="CHEBI:29105"/>
        <label>1</label>
    </ligand>
</feature>
<feature type="binding site" evidence="1">
    <location>
        <position position="84"/>
    </location>
    <ligand>
        <name>Zn(2+)</name>
        <dbReference type="ChEBI" id="CHEBI:29105"/>
        <label>1</label>
    </ligand>
</feature>
<feature type="binding site" evidence="1">
    <location>
        <position position="472"/>
    </location>
    <ligand>
        <name>Mg(2+)</name>
        <dbReference type="ChEBI" id="CHEBI:18420"/>
    </ligand>
</feature>
<feature type="binding site" evidence="1">
    <location>
        <position position="474"/>
    </location>
    <ligand>
        <name>Mg(2+)</name>
        <dbReference type="ChEBI" id="CHEBI:18420"/>
    </ligand>
</feature>
<feature type="binding site" evidence="1">
    <location>
        <position position="476"/>
    </location>
    <ligand>
        <name>Mg(2+)</name>
        <dbReference type="ChEBI" id="CHEBI:18420"/>
    </ligand>
</feature>
<feature type="binding site" evidence="1">
    <location>
        <position position="815"/>
    </location>
    <ligand>
        <name>Zn(2+)</name>
        <dbReference type="ChEBI" id="CHEBI:29105"/>
        <label>2</label>
    </ligand>
</feature>
<feature type="binding site" evidence="1">
    <location>
        <position position="889"/>
    </location>
    <ligand>
        <name>Zn(2+)</name>
        <dbReference type="ChEBI" id="CHEBI:29105"/>
        <label>2</label>
    </ligand>
</feature>
<feature type="binding site" evidence="1">
    <location>
        <position position="896"/>
    </location>
    <ligand>
        <name>Zn(2+)</name>
        <dbReference type="ChEBI" id="CHEBI:29105"/>
        <label>2</label>
    </ligand>
</feature>
<feature type="binding site" evidence="1">
    <location>
        <position position="899"/>
    </location>
    <ligand>
        <name>Zn(2+)</name>
        <dbReference type="ChEBI" id="CHEBI:29105"/>
        <label>2</label>
    </ligand>
</feature>
<dbReference type="EC" id="2.7.7.6" evidence="1"/>
<dbReference type="EMBL" id="AE015928">
    <property type="protein sequence ID" value="AAO77839.1"/>
    <property type="molecule type" value="Genomic_DNA"/>
</dbReference>
<dbReference type="RefSeq" id="NP_811645.1">
    <property type="nucleotide sequence ID" value="NC_004663.1"/>
</dbReference>
<dbReference type="RefSeq" id="WP_011108455.1">
    <property type="nucleotide sequence ID" value="NC_004663.1"/>
</dbReference>
<dbReference type="SMR" id="Q8A470"/>
<dbReference type="FunCoup" id="Q8A470">
    <property type="interactions" value="554"/>
</dbReference>
<dbReference type="STRING" id="226186.BT_2733"/>
<dbReference type="PaxDb" id="226186-BT_2733"/>
<dbReference type="EnsemblBacteria" id="AAO77839">
    <property type="protein sequence ID" value="AAO77839"/>
    <property type="gene ID" value="BT_2733"/>
</dbReference>
<dbReference type="KEGG" id="bth:BT_2733"/>
<dbReference type="PATRIC" id="fig|226186.12.peg.2776"/>
<dbReference type="eggNOG" id="COG0086">
    <property type="taxonomic scope" value="Bacteria"/>
</dbReference>
<dbReference type="HOGENOM" id="CLU_000524_3_1_10"/>
<dbReference type="InParanoid" id="Q8A470"/>
<dbReference type="OrthoDB" id="9815296at2"/>
<dbReference type="Proteomes" id="UP000001414">
    <property type="component" value="Chromosome"/>
</dbReference>
<dbReference type="GO" id="GO:0000428">
    <property type="term" value="C:DNA-directed RNA polymerase complex"/>
    <property type="evidence" value="ECO:0007669"/>
    <property type="project" value="UniProtKB-KW"/>
</dbReference>
<dbReference type="GO" id="GO:0003677">
    <property type="term" value="F:DNA binding"/>
    <property type="evidence" value="ECO:0007669"/>
    <property type="project" value="UniProtKB-UniRule"/>
</dbReference>
<dbReference type="GO" id="GO:0003899">
    <property type="term" value="F:DNA-directed RNA polymerase activity"/>
    <property type="evidence" value="ECO:0007669"/>
    <property type="project" value="UniProtKB-UniRule"/>
</dbReference>
<dbReference type="GO" id="GO:0000287">
    <property type="term" value="F:magnesium ion binding"/>
    <property type="evidence" value="ECO:0007669"/>
    <property type="project" value="UniProtKB-UniRule"/>
</dbReference>
<dbReference type="GO" id="GO:0008270">
    <property type="term" value="F:zinc ion binding"/>
    <property type="evidence" value="ECO:0007669"/>
    <property type="project" value="UniProtKB-UniRule"/>
</dbReference>
<dbReference type="GO" id="GO:0006351">
    <property type="term" value="P:DNA-templated transcription"/>
    <property type="evidence" value="ECO:0007669"/>
    <property type="project" value="UniProtKB-UniRule"/>
</dbReference>
<dbReference type="CDD" id="cd02655">
    <property type="entry name" value="RNAP_beta'_C"/>
    <property type="match status" value="1"/>
</dbReference>
<dbReference type="CDD" id="cd01609">
    <property type="entry name" value="RNAP_beta'_N"/>
    <property type="match status" value="1"/>
</dbReference>
<dbReference type="Gene3D" id="1.10.132.30">
    <property type="match status" value="1"/>
</dbReference>
<dbReference type="Gene3D" id="1.10.150.390">
    <property type="match status" value="1"/>
</dbReference>
<dbReference type="Gene3D" id="1.10.1790.20">
    <property type="match status" value="1"/>
</dbReference>
<dbReference type="Gene3D" id="1.10.40.90">
    <property type="match status" value="1"/>
</dbReference>
<dbReference type="Gene3D" id="2.40.40.20">
    <property type="match status" value="1"/>
</dbReference>
<dbReference type="Gene3D" id="2.40.50.100">
    <property type="match status" value="3"/>
</dbReference>
<dbReference type="Gene3D" id="4.10.860.120">
    <property type="entry name" value="RNA polymerase II, clamp domain"/>
    <property type="match status" value="1"/>
</dbReference>
<dbReference type="Gene3D" id="1.10.274.100">
    <property type="entry name" value="RNA polymerase Rpb1, domain 3"/>
    <property type="match status" value="2"/>
</dbReference>
<dbReference type="HAMAP" id="MF_01322">
    <property type="entry name" value="RNApol_bact_RpoC"/>
    <property type="match status" value="1"/>
</dbReference>
<dbReference type="InterPro" id="IPR045867">
    <property type="entry name" value="DNA-dir_RpoC_beta_prime"/>
</dbReference>
<dbReference type="InterPro" id="IPR012754">
    <property type="entry name" value="DNA-dir_RpoC_beta_prime_bact"/>
</dbReference>
<dbReference type="InterPro" id="IPR000722">
    <property type="entry name" value="RNA_pol_asu"/>
</dbReference>
<dbReference type="InterPro" id="IPR006592">
    <property type="entry name" value="RNA_pol_N"/>
</dbReference>
<dbReference type="InterPro" id="IPR007080">
    <property type="entry name" value="RNA_pol_Rpb1_1"/>
</dbReference>
<dbReference type="InterPro" id="IPR007066">
    <property type="entry name" value="RNA_pol_Rpb1_3"/>
</dbReference>
<dbReference type="InterPro" id="IPR042102">
    <property type="entry name" value="RNA_pol_Rpb1_3_sf"/>
</dbReference>
<dbReference type="InterPro" id="IPR007083">
    <property type="entry name" value="RNA_pol_Rpb1_4"/>
</dbReference>
<dbReference type="InterPro" id="IPR007081">
    <property type="entry name" value="RNA_pol_Rpb1_5"/>
</dbReference>
<dbReference type="InterPro" id="IPR044893">
    <property type="entry name" value="RNA_pol_Rpb1_clamp_domain"/>
</dbReference>
<dbReference type="InterPro" id="IPR038120">
    <property type="entry name" value="Rpb1_funnel_sf"/>
</dbReference>
<dbReference type="NCBIfam" id="TIGR02386">
    <property type="entry name" value="rpoC_TIGR"/>
    <property type="match status" value="1"/>
</dbReference>
<dbReference type="PANTHER" id="PTHR19376">
    <property type="entry name" value="DNA-DIRECTED RNA POLYMERASE"/>
    <property type="match status" value="1"/>
</dbReference>
<dbReference type="PANTHER" id="PTHR19376:SF54">
    <property type="entry name" value="DNA-DIRECTED RNA POLYMERASE SUBUNIT BETA"/>
    <property type="match status" value="1"/>
</dbReference>
<dbReference type="Pfam" id="PF04997">
    <property type="entry name" value="RNA_pol_Rpb1_1"/>
    <property type="match status" value="1"/>
</dbReference>
<dbReference type="Pfam" id="PF00623">
    <property type="entry name" value="RNA_pol_Rpb1_2"/>
    <property type="match status" value="2"/>
</dbReference>
<dbReference type="Pfam" id="PF04983">
    <property type="entry name" value="RNA_pol_Rpb1_3"/>
    <property type="match status" value="1"/>
</dbReference>
<dbReference type="Pfam" id="PF05000">
    <property type="entry name" value="RNA_pol_Rpb1_4"/>
    <property type="match status" value="1"/>
</dbReference>
<dbReference type="Pfam" id="PF04998">
    <property type="entry name" value="RNA_pol_Rpb1_5"/>
    <property type="match status" value="1"/>
</dbReference>
<dbReference type="SMART" id="SM00663">
    <property type="entry name" value="RPOLA_N"/>
    <property type="match status" value="1"/>
</dbReference>
<dbReference type="SUPFAM" id="SSF64484">
    <property type="entry name" value="beta and beta-prime subunits of DNA dependent RNA-polymerase"/>
    <property type="match status" value="1"/>
</dbReference>
<organism>
    <name type="scientific">Bacteroides thetaiotaomicron (strain ATCC 29148 / DSM 2079 / JCM 5827 / CCUG 10774 / NCTC 10582 / VPI-5482 / E50)</name>
    <dbReference type="NCBI Taxonomy" id="226186"/>
    <lineage>
        <taxon>Bacteria</taxon>
        <taxon>Pseudomonadati</taxon>
        <taxon>Bacteroidota</taxon>
        <taxon>Bacteroidia</taxon>
        <taxon>Bacteroidales</taxon>
        <taxon>Bacteroidaceae</taxon>
        <taxon>Bacteroides</taxon>
    </lineage>
</organism>
<protein>
    <recommendedName>
        <fullName evidence="1">DNA-directed RNA polymerase subunit beta'</fullName>
        <shortName evidence="1">RNAP subunit beta'</shortName>
        <ecNumber evidence="1">2.7.7.6</ecNumber>
    </recommendedName>
    <alternativeName>
        <fullName evidence="1">RNA polymerase subunit beta'</fullName>
    </alternativeName>
    <alternativeName>
        <fullName evidence="1">Transcriptase subunit beta'</fullName>
    </alternativeName>
</protein>
<gene>
    <name evidence="1" type="primary">rpoC</name>
    <name type="ordered locus">BT_2733</name>
</gene>
<keyword id="KW-0240">DNA-directed RNA polymerase</keyword>
<keyword id="KW-0460">Magnesium</keyword>
<keyword id="KW-0479">Metal-binding</keyword>
<keyword id="KW-0548">Nucleotidyltransferase</keyword>
<keyword id="KW-1185">Reference proteome</keyword>
<keyword id="KW-0804">Transcription</keyword>
<keyword id="KW-0808">Transferase</keyword>
<keyword id="KW-0862">Zinc</keyword>
<comment type="function">
    <text evidence="1">DNA-dependent RNA polymerase catalyzes the transcription of DNA into RNA using the four ribonucleoside triphosphates as substrates.</text>
</comment>
<comment type="catalytic activity">
    <reaction evidence="1">
        <text>RNA(n) + a ribonucleoside 5'-triphosphate = RNA(n+1) + diphosphate</text>
        <dbReference type="Rhea" id="RHEA:21248"/>
        <dbReference type="Rhea" id="RHEA-COMP:14527"/>
        <dbReference type="Rhea" id="RHEA-COMP:17342"/>
        <dbReference type="ChEBI" id="CHEBI:33019"/>
        <dbReference type="ChEBI" id="CHEBI:61557"/>
        <dbReference type="ChEBI" id="CHEBI:140395"/>
        <dbReference type="EC" id="2.7.7.6"/>
    </reaction>
</comment>
<comment type="cofactor">
    <cofactor evidence="1">
        <name>Mg(2+)</name>
        <dbReference type="ChEBI" id="CHEBI:18420"/>
    </cofactor>
    <text evidence="1">Binds 1 Mg(2+) ion per subunit.</text>
</comment>
<comment type="cofactor">
    <cofactor evidence="1">
        <name>Zn(2+)</name>
        <dbReference type="ChEBI" id="CHEBI:29105"/>
    </cofactor>
    <text evidence="1">Binds 2 Zn(2+) ions per subunit.</text>
</comment>
<comment type="subunit">
    <text evidence="1">The RNAP catalytic core consists of 2 alpha, 1 beta, 1 beta' and 1 omega subunit. When a sigma factor is associated with the core the holoenzyme is formed, which can initiate transcription.</text>
</comment>
<comment type="similarity">
    <text evidence="1">Belongs to the RNA polymerase beta' chain family.</text>
</comment>
<evidence type="ECO:0000255" key="1">
    <source>
        <dbReference type="HAMAP-Rule" id="MF_01322"/>
    </source>
</evidence>